<protein>
    <recommendedName>
        <fullName>Toxin TdNa9</fullName>
    </recommendedName>
    <alternativeName>
        <fullName>PT-alpha* NaTx7.1</fullName>
    </alternativeName>
</protein>
<accession>C9X4K7</accession>
<feature type="signal peptide" evidence="3">
    <location>
        <begin position="1"/>
        <end position="21"/>
    </location>
</feature>
<feature type="chain" id="PRO_5000525373" description="Toxin TdNa9">
    <location>
        <begin position="22"/>
        <end position="85"/>
    </location>
</feature>
<feature type="domain" description="LCN-type CS-alpha/beta" evidence="2">
    <location>
        <begin position="22"/>
        <end position="84"/>
    </location>
</feature>
<feature type="disulfide bond" evidence="2">
    <location>
        <begin position="33"/>
        <end position="83"/>
    </location>
</feature>
<feature type="disulfide bond" evidence="2">
    <location>
        <begin position="37"/>
        <end position="58"/>
    </location>
</feature>
<feature type="disulfide bond" evidence="2">
    <location>
        <begin position="43"/>
        <end position="63"/>
    </location>
</feature>
<feature type="disulfide bond" evidence="2">
    <location>
        <begin position="47"/>
        <end position="65"/>
    </location>
</feature>
<feature type="sequence conflict" description="In Ref. 1; CAY61944." evidence="4" ref="1">
    <original>C</original>
    <variation>S</variation>
    <location>
        <position position="43"/>
    </location>
</feature>
<comment type="function">
    <text evidence="1">Alpha toxins bind voltage-independently at site-3 of sodium channels (Nav) and inhibit the inactivation of the activated channels, thereby blocking neuronal transmission. This toxin binds, in vitro, to sodium channels and inhibits the inactivation of the activated channels. Seems not toxic to mice, crickets and sweet-water shrimps (By similarity).</text>
</comment>
<comment type="subcellular location">
    <subcellularLocation>
        <location>Secreted</location>
    </subcellularLocation>
</comment>
<comment type="tissue specificity">
    <text>Expressed by the venom gland.</text>
</comment>
<comment type="domain">
    <text evidence="4">Has the structural arrangement of an alpha-helix connected to antiparallel beta-sheets by disulfide bonds (CS-alpha/beta).</text>
</comment>
<comment type="similarity">
    <text evidence="4">Belongs to the long (4 C-C) scorpion toxin superfamily. Sodium channel inhibitor family. Beta subfamily.</text>
</comment>
<comment type="caution">
    <text evidence="4">The Cys-43 indicated here is taken from the partial sequence in amino acid, and not from the translation of the transcript in which a Ser is found.</text>
</comment>
<comment type="caution">
    <text evidence="4">This toxin sequence resembles the beta scorpion toxin class, although patch-clamp experiments shows the induction of supplementary slow inactivation of sodium channels, which means that it behaves like an alpha scorpion toxin.</text>
</comment>
<organism>
    <name type="scientific">Tityus discrepans</name>
    <name type="common">Venezuelan scorpion</name>
    <dbReference type="NCBI Taxonomy" id="57059"/>
    <lineage>
        <taxon>Eukaryota</taxon>
        <taxon>Metazoa</taxon>
        <taxon>Ecdysozoa</taxon>
        <taxon>Arthropoda</taxon>
        <taxon>Chelicerata</taxon>
        <taxon>Arachnida</taxon>
        <taxon>Scorpiones</taxon>
        <taxon>Buthida</taxon>
        <taxon>Buthoidea</taxon>
        <taxon>Buthidae</taxon>
        <taxon>Tityus</taxon>
    </lineage>
</organism>
<reference key="1">
    <citation type="journal article" date="2009" name="Biochimie">
        <title>Molecular cloning and nucleotide sequence analysis of genes from a cDNA library of the scorpion Tityus discrepans.</title>
        <authorList>
            <person name="D'Suze G."/>
            <person name="Schwartz E.F."/>
            <person name="Garcia-Gomez B.I."/>
            <person name="Sevcik C."/>
            <person name="Possani L.D."/>
        </authorList>
    </citation>
    <scope>NUCLEOTIDE SEQUENCE [MRNA]</scope>
    <scope>PROTEIN SEQUENCE OF 22-47</scope>
    <source>
        <tissue>Venom</tissue>
        <tissue>Venom gland</tissue>
    </source>
</reference>
<reference key="2">
    <citation type="journal article" date="2012" name="PLoS ONE">
        <title>Identification and phylogenetic analysis of Tityus pachyurus and Tityus obscurus novel putative Na+-channel scorpion toxins.</title>
        <authorList>
            <person name="Guerrero-Vargas J.A."/>
            <person name="Mourao C.B."/>
            <person name="Quintero-Hernandez V."/>
            <person name="Possani L.D."/>
            <person name="Schwartz E.F."/>
        </authorList>
    </citation>
    <scope>NOMENCLATURE</scope>
</reference>
<evidence type="ECO:0000250" key="1"/>
<evidence type="ECO:0000255" key="2">
    <source>
        <dbReference type="PROSITE-ProRule" id="PRU01210"/>
    </source>
</evidence>
<evidence type="ECO:0000269" key="3">
    <source>
    </source>
</evidence>
<evidence type="ECO:0000305" key="4"/>
<sequence>MLKFAIAVALLLFIGLELREARDGYPQSKVNYCKIYCPNTTVCQWTCKNRAGATDGDCRWSSCYCFNVAPDTVLYGDPGTKPCMA</sequence>
<name>SCNA9_TITDI</name>
<dbReference type="EMBL" id="FN392285">
    <property type="protein sequence ID" value="CAY61944.1"/>
    <property type="molecule type" value="mRNA"/>
</dbReference>
<dbReference type="SMR" id="C9X4K7"/>
<dbReference type="TCDB" id="8.B.1.1.11">
    <property type="family name" value="the long (4c-c) scorpion toxin (l-st) superfamily"/>
</dbReference>
<dbReference type="GO" id="GO:0005576">
    <property type="term" value="C:extracellular region"/>
    <property type="evidence" value="ECO:0007669"/>
    <property type="project" value="UniProtKB-SubCell"/>
</dbReference>
<dbReference type="GO" id="GO:0008200">
    <property type="term" value="F:ion channel inhibitor activity"/>
    <property type="evidence" value="ECO:0007669"/>
    <property type="project" value="InterPro"/>
</dbReference>
<dbReference type="GO" id="GO:0017080">
    <property type="term" value="F:sodium channel regulator activity"/>
    <property type="evidence" value="ECO:0007669"/>
    <property type="project" value="UniProtKB-KW"/>
</dbReference>
<dbReference type="GO" id="GO:0090729">
    <property type="term" value="F:toxin activity"/>
    <property type="evidence" value="ECO:0007669"/>
    <property type="project" value="UniProtKB-KW"/>
</dbReference>
<dbReference type="Gene3D" id="3.30.30.10">
    <property type="entry name" value="Knottin, scorpion toxin-like"/>
    <property type="match status" value="1"/>
</dbReference>
<dbReference type="InterPro" id="IPR044062">
    <property type="entry name" value="LCN-type_CS_alpha_beta_dom"/>
</dbReference>
<dbReference type="InterPro" id="IPR036574">
    <property type="entry name" value="Scorpion_toxin-like_sf"/>
</dbReference>
<dbReference type="SUPFAM" id="SSF57095">
    <property type="entry name" value="Scorpion toxin-like"/>
    <property type="match status" value="1"/>
</dbReference>
<dbReference type="PROSITE" id="PS51863">
    <property type="entry name" value="LCN_CSAB"/>
    <property type="match status" value="1"/>
</dbReference>
<keyword id="KW-0903">Direct protein sequencing</keyword>
<keyword id="KW-1015">Disulfide bond</keyword>
<keyword id="KW-0872">Ion channel impairing toxin</keyword>
<keyword id="KW-0528">Neurotoxin</keyword>
<keyword id="KW-0964">Secreted</keyword>
<keyword id="KW-0732">Signal</keyword>
<keyword id="KW-0800">Toxin</keyword>
<keyword id="KW-0738">Voltage-gated sodium channel impairing toxin</keyword>
<proteinExistence type="evidence at protein level"/>